<protein>
    <recommendedName>
        <fullName evidence="1">Cell division inhibitor SulA</fullName>
    </recommendedName>
</protein>
<keyword id="KW-0131">Cell cycle</keyword>
<keyword id="KW-0132">Cell division</keyword>
<keyword id="KW-0227">DNA damage</keyword>
<keyword id="KW-0717">Septation</keyword>
<keyword id="KW-0742">SOS response</keyword>
<proteinExistence type="inferred from homology"/>
<gene>
    <name evidence="1" type="primary">sulA</name>
    <name type="ordered locus">YPTS_1560</name>
</gene>
<reference key="1">
    <citation type="submission" date="2008-04" db="EMBL/GenBank/DDBJ databases">
        <title>Complete sequence of Yersinia pseudotuberculosis PB1/+.</title>
        <authorList>
            <person name="Copeland A."/>
            <person name="Lucas S."/>
            <person name="Lapidus A."/>
            <person name="Glavina del Rio T."/>
            <person name="Dalin E."/>
            <person name="Tice H."/>
            <person name="Bruce D."/>
            <person name="Goodwin L."/>
            <person name="Pitluck S."/>
            <person name="Munk A.C."/>
            <person name="Brettin T."/>
            <person name="Detter J.C."/>
            <person name="Han C."/>
            <person name="Tapia R."/>
            <person name="Schmutz J."/>
            <person name="Larimer F."/>
            <person name="Land M."/>
            <person name="Hauser L."/>
            <person name="Challacombe J.F."/>
            <person name="Green L."/>
            <person name="Lindler L.E."/>
            <person name="Nikolich M.P."/>
            <person name="Richardson P."/>
        </authorList>
    </citation>
    <scope>NUCLEOTIDE SEQUENCE [LARGE SCALE GENOMIC DNA]</scope>
    <source>
        <strain>PB1/+</strain>
    </source>
</reference>
<comment type="function">
    <text evidence="1">Component of the SOS system and an inhibitor of cell division. Accumulation of SulA causes rapid cessation of cell division and the appearance of long, non-septate filaments. In the presence of GTP, binds a polymerization-competent form of FtsZ in a 1:1 ratio, thus inhibiting FtsZ polymerization and therefore preventing it from participating in the assembly of the Z ring. This mechanism prevents the premature segregation of damaged DNA to daughter cells during cell division.</text>
</comment>
<comment type="subunit">
    <text evidence="1">Interacts with FtsZ.</text>
</comment>
<comment type="induction">
    <text evidence="1">By DNA damage, as part of the SOS response.</text>
</comment>
<comment type="PTM">
    <text evidence="1">Is rapidly cleaved and degraded by the Lon protease once DNA damage is repaired.</text>
</comment>
<comment type="similarity">
    <text evidence="1">Belongs to the SulA family.</text>
</comment>
<name>SULA_YERPB</name>
<dbReference type="EMBL" id="CP001048">
    <property type="protein sequence ID" value="ACC88532.1"/>
    <property type="molecule type" value="Genomic_DNA"/>
</dbReference>
<dbReference type="RefSeq" id="WP_002213065.1">
    <property type="nucleotide sequence ID" value="NZ_CP009780.1"/>
</dbReference>
<dbReference type="SMR" id="B2JYT5"/>
<dbReference type="GeneID" id="57977127"/>
<dbReference type="KEGG" id="ypb:YPTS_1560"/>
<dbReference type="PATRIC" id="fig|502801.10.peg.924"/>
<dbReference type="GO" id="GO:0000917">
    <property type="term" value="P:division septum assembly"/>
    <property type="evidence" value="ECO:0007669"/>
    <property type="project" value="UniProtKB-KW"/>
</dbReference>
<dbReference type="GO" id="GO:0006281">
    <property type="term" value="P:DNA repair"/>
    <property type="evidence" value="ECO:0007669"/>
    <property type="project" value="TreeGrafter"/>
</dbReference>
<dbReference type="GO" id="GO:0051782">
    <property type="term" value="P:negative regulation of cell division"/>
    <property type="evidence" value="ECO:0007669"/>
    <property type="project" value="UniProtKB-UniRule"/>
</dbReference>
<dbReference type="GO" id="GO:0009432">
    <property type="term" value="P:SOS response"/>
    <property type="evidence" value="ECO:0007669"/>
    <property type="project" value="UniProtKB-UniRule"/>
</dbReference>
<dbReference type="FunFam" id="3.40.50.300:FF:000417">
    <property type="entry name" value="Cell division inhibitor SulA"/>
    <property type="match status" value="1"/>
</dbReference>
<dbReference type="Gene3D" id="3.40.50.300">
    <property type="entry name" value="P-loop containing nucleotide triphosphate hydrolases"/>
    <property type="match status" value="1"/>
</dbReference>
<dbReference type="HAMAP" id="MF_01179">
    <property type="entry name" value="SulA"/>
    <property type="match status" value="1"/>
</dbReference>
<dbReference type="InterPro" id="IPR004596">
    <property type="entry name" value="Cell_div_suppressor_SulA"/>
</dbReference>
<dbReference type="InterPro" id="IPR027417">
    <property type="entry name" value="P-loop_NTPase"/>
</dbReference>
<dbReference type="InterPro" id="IPR050356">
    <property type="entry name" value="SulA_CellDiv_inhibitor"/>
</dbReference>
<dbReference type="InterPro" id="IPR047696">
    <property type="entry name" value="SulA_enterobact"/>
</dbReference>
<dbReference type="NCBIfam" id="NF007892">
    <property type="entry name" value="PRK10595.1"/>
    <property type="match status" value="1"/>
</dbReference>
<dbReference type="NCBIfam" id="TIGR00623">
    <property type="entry name" value="SOS_SulA_coli"/>
    <property type="match status" value="1"/>
</dbReference>
<dbReference type="PANTHER" id="PTHR35369">
    <property type="entry name" value="BLR3025 PROTEIN-RELATED"/>
    <property type="match status" value="1"/>
</dbReference>
<dbReference type="PANTHER" id="PTHR35369:SF4">
    <property type="entry name" value="CELL DIVISION INHIBITOR SULA"/>
    <property type="match status" value="1"/>
</dbReference>
<dbReference type="Pfam" id="PF03846">
    <property type="entry name" value="SulA"/>
    <property type="match status" value="1"/>
</dbReference>
<dbReference type="PIRSF" id="PIRSF003093">
    <property type="entry name" value="SulA"/>
    <property type="match status" value="1"/>
</dbReference>
<dbReference type="SUPFAM" id="SSF52540">
    <property type="entry name" value="P-loop containing nucleoside triphosphate hydrolases"/>
    <property type="match status" value="1"/>
</dbReference>
<sequence length="168" mass="19060">MRTQSLKPYHANYHSLTTNDSPTRVDAPTDSGLISEFVYSENQPVVTQLLLPLLQQLSKQSRWLLWLTPQQKLSRSWLKQSGLPINKVVQLRQINPLSTVEAMEKALLTGNYSVVLGWLPELTEDDRIRLRLAAKLGNAYGFVMRPLNDTKVGSGQCATLKIHSYLYH</sequence>
<organism>
    <name type="scientific">Yersinia pseudotuberculosis serotype IB (strain PB1/+)</name>
    <dbReference type="NCBI Taxonomy" id="502801"/>
    <lineage>
        <taxon>Bacteria</taxon>
        <taxon>Pseudomonadati</taxon>
        <taxon>Pseudomonadota</taxon>
        <taxon>Gammaproteobacteria</taxon>
        <taxon>Enterobacterales</taxon>
        <taxon>Yersiniaceae</taxon>
        <taxon>Yersinia</taxon>
    </lineage>
</organism>
<accession>B2JYT5</accession>
<feature type="chain" id="PRO_1000138173" description="Cell division inhibitor SulA">
    <location>
        <begin position="1"/>
        <end position="168"/>
    </location>
</feature>
<feature type="region of interest" description="FtsZ binding" evidence="1">
    <location>
        <begin position="106"/>
        <end position="112"/>
    </location>
</feature>
<feature type="region of interest" description="Lon protease binding" evidence="1">
    <location>
        <begin position="161"/>
        <end position="168"/>
    </location>
</feature>
<feature type="site" description="Essential for degradation by Lon protease" evidence="1">
    <location>
        <position position="168"/>
    </location>
</feature>
<evidence type="ECO:0000255" key="1">
    <source>
        <dbReference type="HAMAP-Rule" id="MF_01179"/>
    </source>
</evidence>